<name>RL6_SALSV</name>
<comment type="function">
    <text evidence="1">This protein binds to the 23S rRNA, and is important in its secondary structure. It is located near the subunit interface in the base of the L7/L12 stalk, and near the tRNA binding site of the peptidyltransferase center.</text>
</comment>
<comment type="subunit">
    <text evidence="1">Part of the 50S ribosomal subunit.</text>
</comment>
<comment type="similarity">
    <text evidence="1">Belongs to the universal ribosomal protein uL6 family.</text>
</comment>
<feature type="chain" id="PRO_1000144047" description="Large ribosomal subunit protein uL6">
    <location>
        <begin position="1"/>
        <end position="177"/>
    </location>
</feature>
<reference key="1">
    <citation type="journal article" date="2011" name="J. Bacteriol.">
        <title>Comparative genomics of 28 Salmonella enterica isolates: evidence for CRISPR-mediated adaptive sublineage evolution.</title>
        <authorList>
            <person name="Fricke W.F."/>
            <person name="Mammel M.K."/>
            <person name="McDermott P.F."/>
            <person name="Tartera C."/>
            <person name="White D.G."/>
            <person name="Leclerc J.E."/>
            <person name="Ravel J."/>
            <person name="Cebula T.A."/>
        </authorList>
    </citation>
    <scope>NUCLEOTIDE SEQUENCE [LARGE SCALE GENOMIC DNA]</scope>
    <source>
        <strain>CVM19633</strain>
    </source>
</reference>
<gene>
    <name evidence="1" type="primary">rplF</name>
    <name type="ordered locus">SeSA_A3621</name>
</gene>
<evidence type="ECO:0000255" key="1">
    <source>
        <dbReference type="HAMAP-Rule" id="MF_01365"/>
    </source>
</evidence>
<evidence type="ECO:0000305" key="2"/>
<keyword id="KW-0687">Ribonucleoprotein</keyword>
<keyword id="KW-0689">Ribosomal protein</keyword>
<keyword id="KW-0694">RNA-binding</keyword>
<keyword id="KW-0699">rRNA-binding</keyword>
<sequence>MSRVAKAPVVVPAGVDVKINGQVITIKGKNGELTRTLNDAVEVKHADNALTFGPRDGYADGWAQAGTARALLNSMVIGVTEGFTKKLQLVGVGYRAAVKGNVVNLSLGFSHPVDHQLPAGITAECPTQTEIVLKGADKQVIGQVAADLRAYRRPEPYKGKGVRYADEVVRTKEAKKK</sequence>
<dbReference type="EMBL" id="CP001127">
    <property type="protein sequence ID" value="ACF90632.1"/>
    <property type="molecule type" value="Genomic_DNA"/>
</dbReference>
<dbReference type="RefSeq" id="WP_000091939.1">
    <property type="nucleotide sequence ID" value="NC_011094.1"/>
</dbReference>
<dbReference type="SMR" id="B4TXC7"/>
<dbReference type="KEGG" id="sew:SeSA_A3621"/>
<dbReference type="HOGENOM" id="CLU_065464_1_2_6"/>
<dbReference type="Proteomes" id="UP000001865">
    <property type="component" value="Chromosome"/>
</dbReference>
<dbReference type="GO" id="GO:0022625">
    <property type="term" value="C:cytosolic large ribosomal subunit"/>
    <property type="evidence" value="ECO:0007669"/>
    <property type="project" value="TreeGrafter"/>
</dbReference>
<dbReference type="GO" id="GO:0019843">
    <property type="term" value="F:rRNA binding"/>
    <property type="evidence" value="ECO:0007669"/>
    <property type="project" value="UniProtKB-UniRule"/>
</dbReference>
<dbReference type="GO" id="GO:0003735">
    <property type="term" value="F:structural constituent of ribosome"/>
    <property type="evidence" value="ECO:0007669"/>
    <property type="project" value="InterPro"/>
</dbReference>
<dbReference type="GO" id="GO:0002181">
    <property type="term" value="P:cytoplasmic translation"/>
    <property type="evidence" value="ECO:0007669"/>
    <property type="project" value="TreeGrafter"/>
</dbReference>
<dbReference type="FunFam" id="3.90.930.12:FF:000001">
    <property type="entry name" value="50S ribosomal protein L6"/>
    <property type="match status" value="1"/>
</dbReference>
<dbReference type="FunFam" id="3.90.930.12:FF:000002">
    <property type="entry name" value="50S ribosomal protein L6"/>
    <property type="match status" value="1"/>
</dbReference>
<dbReference type="Gene3D" id="3.90.930.12">
    <property type="entry name" value="Ribosomal protein L6, alpha-beta domain"/>
    <property type="match status" value="2"/>
</dbReference>
<dbReference type="HAMAP" id="MF_01365_B">
    <property type="entry name" value="Ribosomal_uL6_B"/>
    <property type="match status" value="1"/>
</dbReference>
<dbReference type="InterPro" id="IPR000702">
    <property type="entry name" value="Ribosomal_uL6-like"/>
</dbReference>
<dbReference type="InterPro" id="IPR036789">
    <property type="entry name" value="Ribosomal_uL6-like_a/b-dom_sf"/>
</dbReference>
<dbReference type="InterPro" id="IPR020040">
    <property type="entry name" value="Ribosomal_uL6_a/b-dom"/>
</dbReference>
<dbReference type="InterPro" id="IPR019906">
    <property type="entry name" value="Ribosomal_uL6_bac-type"/>
</dbReference>
<dbReference type="InterPro" id="IPR002358">
    <property type="entry name" value="Ribosomal_uL6_CS"/>
</dbReference>
<dbReference type="NCBIfam" id="TIGR03654">
    <property type="entry name" value="L6_bact"/>
    <property type="match status" value="1"/>
</dbReference>
<dbReference type="PANTHER" id="PTHR11655">
    <property type="entry name" value="60S/50S RIBOSOMAL PROTEIN L6/L9"/>
    <property type="match status" value="1"/>
</dbReference>
<dbReference type="PANTHER" id="PTHR11655:SF14">
    <property type="entry name" value="LARGE RIBOSOMAL SUBUNIT PROTEIN UL6M"/>
    <property type="match status" value="1"/>
</dbReference>
<dbReference type="Pfam" id="PF00347">
    <property type="entry name" value="Ribosomal_L6"/>
    <property type="match status" value="2"/>
</dbReference>
<dbReference type="PIRSF" id="PIRSF002162">
    <property type="entry name" value="Ribosomal_L6"/>
    <property type="match status" value="1"/>
</dbReference>
<dbReference type="PRINTS" id="PR00059">
    <property type="entry name" value="RIBOSOMALL6"/>
</dbReference>
<dbReference type="SUPFAM" id="SSF56053">
    <property type="entry name" value="Ribosomal protein L6"/>
    <property type="match status" value="2"/>
</dbReference>
<dbReference type="PROSITE" id="PS00525">
    <property type="entry name" value="RIBOSOMAL_L6_1"/>
    <property type="match status" value="1"/>
</dbReference>
<organism>
    <name type="scientific">Salmonella schwarzengrund (strain CVM19633)</name>
    <dbReference type="NCBI Taxonomy" id="439843"/>
    <lineage>
        <taxon>Bacteria</taxon>
        <taxon>Pseudomonadati</taxon>
        <taxon>Pseudomonadota</taxon>
        <taxon>Gammaproteobacteria</taxon>
        <taxon>Enterobacterales</taxon>
        <taxon>Enterobacteriaceae</taxon>
        <taxon>Salmonella</taxon>
    </lineage>
</organism>
<protein>
    <recommendedName>
        <fullName evidence="1">Large ribosomal subunit protein uL6</fullName>
    </recommendedName>
    <alternativeName>
        <fullName evidence="2">50S ribosomal protein L6</fullName>
    </alternativeName>
</protein>
<proteinExistence type="inferred from homology"/>
<accession>B4TXC7</accession>